<evidence type="ECO:0000255" key="1">
    <source>
        <dbReference type="HAMAP-Rule" id="MF_00141"/>
    </source>
</evidence>
<name>EFP_SHEDO</name>
<accession>Q12MQ1</accession>
<feature type="chain" id="PRO_1000010847" description="Elongation factor P">
    <location>
        <begin position="1"/>
        <end position="186"/>
    </location>
</feature>
<sequence length="186" mass="20614">MKTAHEIRPGNVIMLDGSPWVVQKTETTRSGRNAAIVKLKLKHVLLDSGTEQTFKGEDKMDVIVLERLDCTYSYFADPMYVFMDADYNQYDVEADNLGDAAAYIIDGMEETCQVTFYEGKAISVELPTHIVREVIYTEPSARGDTSGKVMKPATITGGGTVTVADFVKVGDKIEIDTRTGEFKKRA</sequence>
<reference key="1">
    <citation type="submission" date="2006-03" db="EMBL/GenBank/DDBJ databases">
        <title>Complete sequence of Shewanella denitrificans OS217.</title>
        <authorList>
            <consortium name="US DOE Joint Genome Institute"/>
            <person name="Copeland A."/>
            <person name="Lucas S."/>
            <person name="Lapidus A."/>
            <person name="Barry K."/>
            <person name="Detter J.C."/>
            <person name="Glavina del Rio T."/>
            <person name="Hammon N."/>
            <person name="Israni S."/>
            <person name="Dalin E."/>
            <person name="Tice H."/>
            <person name="Pitluck S."/>
            <person name="Brettin T."/>
            <person name="Bruce D."/>
            <person name="Han C."/>
            <person name="Tapia R."/>
            <person name="Gilna P."/>
            <person name="Kiss H."/>
            <person name="Schmutz J."/>
            <person name="Larimer F."/>
            <person name="Land M."/>
            <person name="Hauser L."/>
            <person name="Kyrpides N."/>
            <person name="Lykidis A."/>
            <person name="Richardson P."/>
        </authorList>
    </citation>
    <scope>NUCLEOTIDE SEQUENCE [LARGE SCALE GENOMIC DNA]</scope>
    <source>
        <strain>OS217 / ATCC BAA-1090 / DSM 15013</strain>
    </source>
</reference>
<protein>
    <recommendedName>
        <fullName evidence="1">Elongation factor P</fullName>
        <shortName evidence="1">EF-P</shortName>
    </recommendedName>
</protein>
<comment type="function">
    <text evidence="1">Involved in peptide bond synthesis. Stimulates efficient translation and peptide-bond synthesis on native or reconstituted 70S ribosomes in vitro. Probably functions indirectly by altering the affinity of the ribosome for aminoacyl-tRNA, thus increasing their reactivity as acceptors for peptidyl transferase.</text>
</comment>
<comment type="pathway">
    <text evidence="1">Protein biosynthesis; polypeptide chain elongation.</text>
</comment>
<comment type="subcellular location">
    <subcellularLocation>
        <location evidence="1">Cytoplasm</location>
    </subcellularLocation>
</comment>
<comment type="similarity">
    <text evidence="1">Belongs to the elongation factor P family.</text>
</comment>
<organism>
    <name type="scientific">Shewanella denitrificans (strain OS217 / ATCC BAA-1090 / DSM 15013)</name>
    <dbReference type="NCBI Taxonomy" id="318161"/>
    <lineage>
        <taxon>Bacteria</taxon>
        <taxon>Pseudomonadati</taxon>
        <taxon>Pseudomonadota</taxon>
        <taxon>Gammaproteobacteria</taxon>
        <taxon>Alteromonadales</taxon>
        <taxon>Shewanellaceae</taxon>
        <taxon>Shewanella</taxon>
    </lineage>
</organism>
<dbReference type="EMBL" id="CP000302">
    <property type="protein sequence ID" value="ABE55275.1"/>
    <property type="molecule type" value="Genomic_DNA"/>
</dbReference>
<dbReference type="RefSeq" id="WP_011496431.1">
    <property type="nucleotide sequence ID" value="NC_007954.1"/>
</dbReference>
<dbReference type="SMR" id="Q12MQ1"/>
<dbReference type="STRING" id="318161.Sden_1992"/>
<dbReference type="KEGG" id="sdn:Sden_1992"/>
<dbReference type="eggNOG" id="COG0231">
    <property type="taxonomic scope" value="Bacteria"/>
</dbReference>
<dbReference type="HOGENOM" id="CLU_074944_2_1_6"/>
<dbReference type="OrthoDB" id="9801844at2"/>
<dbReference type="UniPathway" id="UPA00345"/>
<dbReference type="Proteomes" id="UP000001982">
    <property type="component" value="Chromosome"/>
</dbReference>
<dbReference type="GO" id="GO:0005737">
    <property type="term" value="C:cytoplasm"/>
    <property type="evidence" value="ECO:0007669"/>
    <property type="project" value="UniProtKB-SubCell"/>
</dbReference>
<dbReference type="GO" id="GO:0003746">
    <property type="term" value="F:translation elongation factor activity"/>
    <property type="evidence" value="ECO:0007669"/>
    <property type="project" value="UniProtKB-UniRule"/>
</dbReference>
<dbReference type="GO" id="GO:0043043">
    <property type="term" value="P:peptide biosynthetic process"/>
    <property type="evidence" value="ECO:0007669"/>
    <property type="project" value="InterPro"/>
</dbReference>
<dbReference type="CDD" id="cd04470">
    <property type="entry name" value="S1_EF-P_repeat_1"/>
    <property type="match status" value="1"/>
</dbReference>
<dbReference type="CDD" id="cd05794">
    <property type="entry name" value="S1_EF-P_repeat_2"/>
    <property type="match status" value="1"/>
</dbReference>
<dbReference type="FunFam" id="2.30.30.30:FF:000003">
    <property type="entry name" value="Elongation factor P"/>
    <property type="match status" value="1"/>
</dbReference>
<dbReference type="FunFam" id="2.40.50.140:FF:000004">
    <property type="entry name" value="Elongation factor P"/>
    <property type="match status" value="1"/>
</dbReference>
<dbReference type="FunFam" id="2.40.50.140:FF:000009">
    <property type="entry name" value="Elongation factor P"/>
    <property type="match status" value="1"/>
</dbReference>
<dbReference type="Gene3D" id="2.30.30.30">
    <property type="match status" value="1"/>
</dbReference>
<dbReference type="Gene3D" id="2.40.50.140">
    <property type="entry name" value="Nucleic acid-binding proteins"/>
    <property type="match status" value="2"/>
</dbReference>
<dbReference type="HAMAP" id="MF_00141">
    <property type="entry name" value="EF_P"/>
    <property type="match status" value="1"/>
</dbReference>
<dbReference type="InterPro" id="IPR015365">
    <property type="entry name" value="Elong-fact-P_C"/>
</dbReference>
<dbReference type="InterPro" id="IPR012340">
    <property type="entry name" value="NA-bd_OB-fold"/>
</dbReference>
<dbReference type="InterPro" id="IPR014722">
    <property type="entry name" value="Rib_uL2_dom2"/>
</dbReference>
<dbReference type="InterPro" id="IPR020599">
    <property type="entry name" value="Transl_elong_fac_P/YeiP"/>
</dbReference>
<dbReference type="InterPro" id="IPR013185">
    <property type="entry name" value="Transl_elong_KOW-like"/>
</dbReference>
<dbReference type="InterPro" id="IPR001059">
    <property type="entry name" value="Transl_elong_P/YeiP_cen"/>
</dbReference>
<dbReference type="InterPro" id="IPR011768">
    <property type="entry name" value="Transl_elongation_fac_P"/>
</dbReference>
<dbReference type="InterPro" id="IPR008991">
    <property type="entry name" value="Translation_prot_SH3-like_sf"/>
</dbReference>
<dbReference type="NCBIfam" id="TIGR00038">
    <property type="entry name" value="efp"/>
    <property type="match status" value="1"/>
</dbReference>
<dbReference type="NCBIfam" id="NF001810">
    <property type="entry name" value="PRK00529.1"/>
    <property type="match status" value="1"/>
</dbReference>
<dbReference type="PANTHER" id="PTHR30053">
    <property type="entry name" value="ELONGATION FACTOR P"/>
    <property type="match status" value="1"/>
</dbReference>
<dbReference type="PANTHER" id="PTHR30053:SF12">
    <property type="entry name" value="ELONGATION FACTOR P (EF-P) FAMILY PROTEIN"/>
    <property type="match status" value="1"/>
</dbReference>
<dbReference type="Pfam" id="PF01132">
    <property type="entry name" value="EFP"/>
    <property type="match status" value="1"/>
</dbReference>
<dbReference type="Pfam" id="PF08207">
    <property type="entry name" value="EFP_N"/>
    <property type="match status" value="1"/>
</dbReference>
<dbReference type="Pfam" id="PF09285">
    <property type="entry name" value="Elong-fact-P_C"/>
    <property type="match status" value="1"/>
</dbReference>
<dbReference type="PIRSF" id="PIRSF005901">
    <property type="entry name" value="EF-P"/>
    <property type="match status" value="1"/>
</dbReference>
<dbReference type="SMART" id="SM01185">
    <property type="entry name" value="EFP"/>
    <property type="match status" value="1"/>
</dbReference>
<dbReference type="SMART" id="SM00841">
    <property type="entry name" value="Elong-fact-P_C"/>
    <property type="match status" value="1"/>
</dbReference>
<dbReference type="SUPFAM" id="SSF50249">
    <property type="entry name" value="Nucleic acid-binding proteins"/>
    <property type="match status" value="2"/>
</dbReference>
<dbReference type="SUPFAM" id="SSF50104">
    <property type="entry name" value="Translation proteins SH3-like domain"/>
    <property type="match status" value="1"/>
</dbReference>
<gene>
    <name evidence="1" type="primary">efp</name>
    <name type="ordered locus">Sden_1992</name>
</gene>
<keyword id="KW-0963">Cytoplasm</keyword>
<keyword id="KW-0251">Elongation factor</keyword>
<keyword id="KW-0648">Protein biosynthesis</keyword>
<keyword id="KW-1185">Reference proteome</keyword>
<proteinExistence type="inferred from homology"/>